<proteinExistence type="evidence at transcript level"/>
<feature type="transit peptide" description="Mitochondrion" evidence="1">
    <location>
        <begin position="1"/>
        <end position="35"/>
    </location>
</feature>
<feature type="chain" id="PRO_0000363549" description="Pentatricopeptide repeat-containing protein At5g41170, mitochondrial">
    <location>
        <begin position="36"/>
        <end position="527"/>
    </location>
</feature>
<feature type="repeat" description="PPR 1">
    <location>
        <begin position="36"/>
        <end position="70"/>
    </location>
</feature>
<feature type="repeat" description="PPR 2">
    <location>
        <begin position="71"/>
        <end position="105"/>
    </location>
</feature>
<feature type="repeat" description="PPR 3">
    <location>
        <begin position="106"/>
        <end position="140"/>
    </location>
</feature>
<feature type="repeat" description="PPR 4">
    <location>
        <begin position="141"/>
        <end position="175"/>
    </location>
</feature>
<feature type="repeat" description="PPR 5">
    <location>
        <begin position="176"/>
        <end position="210"/>
    </location>
</feature>
<feature type="repeat" description="PPR 6">
    <location>
        <begin position="211"/>
        <end position="245"/>
    </location>
</feature>
<feature type="repeat" description="PPR 7">
    <location>
        <begin position="246"/>
        <end position="280"/>
    </location>
</feature>
<feature type="repeat" description="PPR 8">
    <location>
        <begin position="281"/>
        <end position="315"/>
    </location>
</feature>
<feature type="repeat" description="PPR 9">
    <location>
        <begin position="316"/>
        <end position="350"/>
    </location>
</feature>
<feature type="repeat" description="PPR 10">
    <location>
        <begin position="351"/>
        <end position="385"/>
    </location>
</feature>
<feature type="repeat" description="PPR 11">
    <location>
        <begin position="386"/>
        <end position="420"/>
    </location>
</feature>
<feature type="repeat" description="PPR 12">
    <location>
        <begin position="424"/>
        <end position="458"/>
    </location>
</feature>
<feature type="repeat" description="PPR 13">
    <location>
        <begin position="459"/>
        <end position="493"/>
    </location>
</feature>
<feature type="repeat" description="PPR 14">
    <location>
        <begin position="494"/>
        <end position="527"/>
    </location>
</feature>
<organism>
    <name type="scientific">Arabidopsis thaliana</name>
    <name type="common">Mouse-ear cress</name>
    <dbReference type="NCBI Taxonomy" id="3702"/>
    <lineage>
        <taxon>Eukaryota</taxon>
        <taxon>Viridiplantae</taxon>
        <taxon>Streptophyta</taxon>
        <taxon>Embryophyta</taxon>
        <taxon>Tracheophyta</taxon>
        <taxon>Spermatophyta</taxon>
        <taxon>Magnoliopsida</taxon>
        <taxon>eudicotyledons</taxon>
        <taxon>Gunneridae</taxon>
        <taxon>Pentapetalae</taxon>
        <taxon>rosids</taxon>
        <taxon>malvids</taxon>
        <taxon>Brassicales</taxon>
        <taxon>Brassicaceae</taxon>
        <taxon>Camelineae</taxon>
        <taxon>Arabidopsis</taxon>
    </lineage>
</organism>
<dbReference type="EMBL" id="AB010072">
    <property type="protein sequence ID" value="BAB09719.1"/>
    <property type="molecule type" value="Genomic_DNA"/>
</dbReference>
<dbReference type="EMBL" id="CP002688">
    <property type="protein sequence ID" value="AED94650.1"/>
    <property type="molecule type" value="Genomic_DNA"/>
</dbReference>
<dbReference type="EMBL" id="BT023465">
    <property type="protein sequence ID" value="AAY56456.1"/>
    <property type="molecule type" value="mRNA"/>
</dbReference>
<dbReference type="RefSeq" id="NP_198933.1">
    <property type="nucleotide sequence ID" value="NM_123482.3"/>
</dbReference>
<dbReference type="SMR" id="Q9FLL3"/>
<dbReference type="STRING" id="3702.Q9FLL3"/>
<dbReference type="PaxDb" id="3702-AT5G41170.1"/>
<dbReference type="EnsemblPlants" id="AT5G41170.1">
    <property type="protein sequence ID" value="AT5G41170.1"/>
    <property type="gene ID" value="AT5G41170"/>
</dbReference>
<dbReference type="GeneID" id="834119"/>
<dbReference type="Gramene" id="AT5G41170.1">
    <property type="protein sequence ID" value="AT5G41170.1"/>
    <property type="gene ID" value="AT5G41170"/>
</dbReference>
<dbReference type="KEGG" id="ath:AT5G41170"/>
<dbReference type="Araport" id="AT5G41170"/>
<dbReference type="TAIR" id="AT5G41170"/>
<dbReference type="eggNOG" id="KOG4197">
    <property type="taxonomic scope" value="Eukaryota"/>
</dbReference>
<dbReference type="HOGENOM" id="CLU_002706_49_0_1"/>
<dbReference type="InParanoid" id="Q9FLL3"/>
<dbReference type="OMA" id="LACNHIN"/>
<dbReference type="OrthoDB" id="185373at2759"/>
<dbReference type="PhylomeDB" id="Q9FLL3"/>
<dbReference type="PRO" id="PR:Q9FLL3"/>
<dbReference type="Proteomes" id="UP000006548">
    <property type="component" value="Chromosome 5"/>
</dbReference>
<dbReference type="ExpressionAtlas" id="Q9FLL3">
    <property type="expression patterns" value="baseline and differential"/>
</dbReference>
<dbReference type="GO" id="GO:0005739">
    <property type="term" value="C:mitochondrion"/>
    <property type="evidence" value="ECO:0007669"/>
    <property type="project" value="UniProtKB-SubCell"/>
</dbReference>
<dbReference type="FunFam" id="1.25.40.10:FF:000558">
    <property type="entry name" value="Pentatricopeptide repeat-containing protein At5g39710"/>
    <property type="match status" value="1"/>
</dbReference>
<dbReference type="Gene3D" id="1.25.40.10">
    <property type="entry name" value="Tetratricopeptide repeat domain"/>
    <property type="match status" value="6"/>
</dbReference>
<dbReference type="InterPro" id="IPR002885">
    <property type="entry name" value="Pentatricopeptide_rpt"/>
</dbReference>
<dbReference type="InterPro" id="IPR011990">
    <property type="entry name" value="TPR-like_helical_dom_sf"/>
</dbReference>
<dbReference type="NCBIfam" id="TIGR00756">
    <property type="entry name" value="PPR"/>
    <property type="match status" value="12"/>
</dbReference>
<dbReference type="PANTHER" id="PTHR47932">
    <property type="entry name" value="ATPASE EXPRESSION PROTEIN 3"/>
    <property type="match status" value="1"/>
</dbReference>
<dbReference type="PANTHER" id="PTHR47932:SF62">
    <property type="entry name" value="EXPRESSED PROTEIN"/>
    <property type="match status" value="1"/>
</dbReference>
<dbReference type="Pfam" id="PF12854">
    <property type="entry name" value="PPR_1"/>
    <property type="match status" value="1"/>
</dbReference>
<dbReference type="Pfam" id="PF13041">
    <property type="entry name" value="PPR_2"/>
    <property type="match status" value="5"/>
</dbReference>
<dbReference type="PROSITE" id="PS51375">
    <property type="entry name" value="PPR"/>
    <property type="match status" value="14"/>
</dbReference>
<accession>Q9FLL3</accession>
<sequence length="527" mass="59961">MAMRFFQLHRNRLVKGNSGKALSFSRLLDLSFWVRAFCNYREILRNGLHSLQFNEALDLFTHMVESRPLPSIIDFTKLLNVIAKMKKFDVVINLCDHLQIMGVSHDLYTCNLLMNCFCQSSQPYLASSFLGKMMKLGFEPDIVTFTSLINGFCLGNRMEEAMSMVNQMVEMGIKPDVVMYTTIIDSLCKNGHVNYALSLFDQMENYGIRPDVVMYTSLVNGLCNSGRWRDADSLLRGMTKRKIKPDVITFNALIDAFVKEGKFLDAEELYNEMIRMSIAPNIFTYTSLINGFCMEGCVDEARQMFYLMETKGCFPDVVAYTSLINGFCKCKKVDDAMKIFYEMSQKGLTGNTITYTTLIQGFGQVGKPNVAQEVFSHMVSRGVPPNIRTYNVLLHCLCYNGKVKKALMIFEDMQKREMDGVAPNIWTYNVLLHGLCYNGKLEKALMVFEDMRKREMDIGIITYTIIIQGMCKAGKVKNAVNLFCSLPSKGVKPNVVTYTTMISGLFREGLKHEAHVLFRKMKEDGVS</sequence>
<gene>
    <name type="ordered locus">At5g41170</name>
    <name type="ORF">MEE6.24</name>
</gene>
<name>PP412_ARATH</name>
<comment type="subcellular location">
    <subcellularLocation>
        <location evidence="2">Mitochondrion</location>
    </subcellularLocation>
</comment>
<comment type="similarity">
    <text evidence="2">Belongs to the PPR family. P subfamily.</text>
</comment>
<comment type="online information" name="Pentatricopeptide repeat proteins">
    <link uri="https://ppr.plantenergy.uwa.edu.au"/>
</comment>
<keyword id="KW-0496">Mitochondrion</keyword>
<keyword id="KW-1185">Reference proteome</keyword>
<keyword id="KW-0677">Repeat</keyword>
<keyword id="KW-0809">Transit peptide</keyword>
<reference key="1">
    <citation type="journal article" date="1998" name="DNA Res.">
        <title>Structural analysis of Arabidopsis thaliana chromosome 5. IV. Sequence features of the regions of 1,456,315 bp covered by nineteen physically assigned P1 and TAC clones.</title>
        <authorList>
            <person name="Sato S."/>
            <person name="Kaneko T."/>
            <person name="Kotani H."/>
            <person name="Nakamura Y."/>
            <person name="Asamizu E."/>
            <person name="Miyajima N."/>
            <person name="Tabata S."/>
        </authorList>
    </citation>
    <scope>NUCLEOTIDE SEQUENCE [LARGE SCALE GENOMIC DNA]</scope>
    <source>
        <strain>cv. Columbia</strain>
    </source>
</reference>
<reference key="2">
    <citation type="journal article" date="2017" name="Plant J.">
        <title>Araport11: a complete reannotation of the Arabidopsis thaliana reference genome.</title>
        <authorList>
            <person name="Cheng C.Y."/>
            <person name="Krishnakumar V."/>
            <person name="Chan A.P."/>
            <person name="Thibaud-Nissen F."/>
            <person name="Schobel S."/>
            <person name="Town C.D."/>
        </authorList>
    </citation>
    <scope>GENOME REANNOTATION</scope>
    <source>
        <strain>cv. Columbia</strain>
    </source>
</reference>
<reference key="3">
    <citation type="submission" date="2005-05" db="EMBL/GenBank/DDBJ databases">
        <title>Arabidopsis ORF clones.</title>
        <authorList>
            <person name="Cheuk R.F."/>
            <person name="Chen H."/>
            <person name="Kim C.J."/>
            <person name="Shinn P."/>
            <person name="Ecker J.R."/>
        </authorList>
    </citation>
    <scope>NUCLEOTIDE SEQUENCE [LARGE SCALE MRNA]</scope>
    <source>
        <strain>cv. Columbia</strain>
    </source>
</reference>
<reference key="4">
    <citation type="journal article" date="2004" name="Plant Cell">
        <title>Genome-wide analysis of Arabidopsis pentatricopeptide repeat proteins reveals their essential role in organelle biogenesis.</title>
        <authorList>
            <person name="Lurin C."/>
            <person name="Andres C."/>
            <person name="Aubourg S."/>
            <person name="Bellaoui M."/>
            <person name="Bitton F."/>
            <person name="Bruyere C."/>
            <person name="Caboche M."/>
            <person name="Debast C."/>
            <person name="Gualberto J."/>
            <person name="Hoffmann B."/>
            <person name="Lecharny A."/>
            <person name="Le Ret M."/>
            <person name="Martin-Magniette M.-L."/>
            <person name="Mireau H."/>
            <person name="Peeters N."/>
            <person name="Renou J.-P."/>
            <person name="Szurek B."/>
            <person name="Taconnat L."/>
            <person name="Small I."/>
        </authorList>
    </citation>
    <scope>GENE FAMILY</scope>
</reference>
<protein>
    <recommendedName>
        <fullName>Pentatricopeptide repeat-containing protein At5g41170, mitochondrial</fullName>
    </recommendedName>
</protein>
<evidence type="ECO:0000255" key="1"/>
<evidence type="ECO:0000305" key="2"/>